<reference key="1">
    <citation type="journal article" date="2008" name="J. Bacteriol.">
        <title>The pangenome structure of Escherichia coli: comparative genomic analysis of E. coli commensal and pathogenic isolates.</title>
        <authorList>
            <person name="Rasko D.A."/>
            <person name="Rosovitz M.J."/>
            <person name="Myers G.S.A."/>
            <person name="Mongodin E.F."/>
            <person name="Fricke W.F."/>
            <person name="Gajer P."/>
            <person name="Crabtree J."/>
            <person name="Sebaihia M."/>
            <person name="Thomson N.R."/>
            <person name="Chaudhuri R."/>
            <person name="Henderson I.R."/>
            <person name="Sperandio V."/>
            <person name="Ravel J."/>
        </authorList>
    </citation>
    <scope>NUCLEOTIDE SEQUENCE [LARGE SCALE GENOMIC DNA]</scope>
    <source>
        <strain>HS</strain>
    </source>
</reference>
<protein>
    <recommendedName>
        <fullName evidence="1">Chromosome partition protein MukB</fullName>
    </recommendedName>
    <alternativeName>
        <fullName evidence="1">Structural maintenance of chromosome-related protein</fullName>
    </alternativeName>
</protein>
<comment type="function">
    <text evidence="1">Plays a central role in chromosome condensation, segregation and cell cycle progression. Functions as a homodimer, which is essential for chromosome partition. Involved in negative DNA supercoiling in vivo, and by this means organize and compact chromosomes. May achieve or facilitate chromosome segregation by condensation DNA from both sides of a centrally located replisome during cell division.</text>
</comment>
<comment type="subunit">
    <text evidence="1">Homodimerization via its hinge domain. Binds to DNA via its C-terminal region. Interacts, and probably forms a ternary complex, with MukE and MukF via its C-terminal region. The complex formation is stimulated by calcium or magnesium. Interacts with tubulin-related protein FtsZ.</text>
</comment>
<comment type="subcellular location">
    <subcellularLocation>
        <location evidence="1">Cytoplasm</location>
        <location evidence="1">Nucleoid</location>
    </subcellularLocation>
    <text evidence="1">Restricted to the nucleoid region.</text>
</comment>
<comment type="domain">
    <text evidence="1">The hinge domain, which separates the large intramolecular coiled coil regions, allows the homodimerization, forming a V-shaped homodimer.</text>
</comment>
<comment type="similarity">
    <text evidence="1">Belongs to the SMC family. MukB subfamily.</text>
</comment>
<dbReference type="EMBL" id="CP000802">
    <property type="protein sequence ID" value="ABV05380.1"/>
    <property type="molecule type" value="Genomic_DNA"/>
</dbReference>
<dbReference type="RefSeq" id="WP_000572667.1">
    <property type="nucleotide sequence ID" value="NC_009800.1"/>
</dbReference>
<dbReference type="SMR" id="A7ZYM6"/>
<dbReference type="KEGG" id="ecx:EcHS_A1031"/>
<dbReference type="HOGENOM" id="CLU_004430_0_0_6"/>
<dbReference type="GO" id="GO:0005737">
    <property type="term" value="C:cytoplasm"/>
    <property type="evidence" value="ECO:0007669"/>
    <property type="project" value="UniProtKB-UniRule"/>
</dbReference>
<dbReference type="GO" id="GO:0009295">
    <property type="term" value="C:nucleoid"/>
    <property type="evidence" value="ECO:0007669"/>
    <property type="project" value="UniProtKB-SubCell"/>
</dbReference>
<dbReference type="GO" id="GO:0005524">
    <property type="term" value="F:ATP binding"/>
    <property type="evidence" value="ECO:0007669"/>
    <property type="project" value="UniProtKB-UniRule"/>
</dbReference>
<dbReference type="GO" id="GO:0003677">
    <property type="term" value="F:DNA binding"/>
    <property type="evidence" value="ECO:0007669"/>
    <property type="project" value="UniProtKB-UniRule"/>
</dbReference>
<dbReference type="GO" id="GO:0051301">
    <property type="term" value="P:cell division"/>
    <property type="evidence" value="ECO:0007669"/>
    <property type="project" value="UniProtKB-KW"/>
</dbReference>
<dbReference type="GO" id="GO:0030261">
    <property type="term" value="P:chromosome condensation"/>
    <property type="evidence" value="ECO:0007669"/>
    <property type="project" value="UniProtKB-KW"/>
</dbReference>
<dbReference type="GO" id="GO:0007059">
    <property type="term" value="P:chromosome segregation"/>
    <property type="evidence" value="ECO:0007669"/>
    <property type="project" value="UniProtKB-UniRule"/>
</dbReference>
<dbReference type="GO" id="GO:0006260">
    <property type="term" value="P:DNA replication"/>
    <property type="evidence" value="ECO:0007669"/>
    <property type="project" value="UniProtKB-UniRule"/>
</dbReference>
<dbReference type="FunFam" id="1.20.58.850:FF:000001">
    <property type="entry name" value="Chromosome partition protein MukB"/>
    <property type="match status" value="1"/>
</dbReference>
<dbReference type="FunFam" id="3.30.70.3500:FF:000001">
    <property type="entry name" value="Chromosome partition protein MukB"/>
    <property type="match status" value="1"/>
</dbReference>
<dbReference type="FunFam" id="3.40.1140.10:FF:000001">
    <property type="entry name" value="Chromosome partition protein MukB"/>
    <property type="match status" value="1"/>
</dbReference>
<dbReference type="FunFam" id="3.40.1140.10:FF:000002">
    <property type="entry name" value="Chromosome partition protein MukB"/>
    <property type="match status" value="1"/>
</dbReference>
<dbReference type="Gene3D" id="1.20.58.850">
    <property type="match status" value="1"/>
</dbReference>
<dbReference type="Gene3D" id="3.40.1140.10">
    <property type="match status" value="2"/>
</dbReference>
<dbReference type="Gene3D" id="1.20.5.420">
    <property type="entry name" value="Immunoglobulin FC, subunit C"/>
    <property type="match status" value="1"/>
</dbReference>
<dbReference type="Gene3D" id="3.30.70.3500">
    <property type="entry name" value="MukB, hinge domain"/>
    <property type="match status" value="1"/>
</dbReference>
<dbReference type="HAMAP" id="MF_01800">
    <property type="entry name" value="MukB"/>
    <property type="match status" value="1"/>
</dbReference>
<dbReference type="InterPro" id="IPR012090">
    <property type="entry name" value="MukB"/>
</dbReference>
<dbReference type="InterPro" id="IPR050308">
    <property type="entry name" value="MukB/SMC"/>
</dbReference>
<dbReference type="InterPro" id="IPR032520">
    <property type="entry name" value="MukB_hinge"/>
</dbReference>
<dbReference type="InterPro" id="IPR042501">
    <property type="entry name" value="MukB_hinge_sf"/>
</dbReference>
<dbReference type="InterPro" id="IPR007406">
    <property type="entry name" value="MukB_N_dom"/>
</dbReference>
<dbReference type="InterPro" id="IPR027417">
    <property type="entry name" value="P-loop_NTPase"/>
</dbReference>
<dbReference type="NCBIfam" id="NF003422">
    <property type="entry name" value="PRK04863.1"/>
    <property type="match status" value="1"/>
</dbReference>
<dbReference type="PANTHER" id="PTHR42963">
    <property type="entry name" value="CHROMOSOME PARTITION PROTEIN MUKB"/>
    <property type="match status" value="1"/>
</dbReference>
<dbReference type="PANTHER" id="PTHR42963:SF1">
    <property type="entry name" value="DUF4476 DOMAIN-CONTAINING PROTEIN"/>
    <property type="match status" value="1"/>
</dbReference>
<dbReference type="Pfam" id="PF04310">
    <property type="entry name" value="MukB"/>
    <property type="match status" value="1"/>
</dbReference>
<dbReference type="Pfam" id="PF16330">
    <property type="entry name" value="MukB_hinge"/>
    <property type="match status" value="1"/>
</dbReference>
<dbReference type="Pfam" id="PF13558">
    <property type="entry name" value="SbcC_Walker_B"/>
    <property type="match status" value="1"/>
</dbReference>
<dbReference type="PIRSF" id="PIRSF005246">
    <property type="entry name" value="MukB"/>
    <property type="match status" value="1"/>
</dbReference>
<dbReference type="SUPFAM" id="SSF52540">
    <property type="entry name" value="P-loop containing nucleoside triphosphate hydrolases"/>
    <property type="match status" value="2"/>
</dbReference>
<evidence type="ECO:0000255" key="1">
    <source>
        <dbReference type="HAMAP-Rule" id="MF_01800"/>
    </source>
</evidence>
<organism>
    <name type="scientific">Escherichia coli O9:H4 (strain HS)</name>
    <dbReference type="NCBI Taxonomy" id="331112"/>
    <lineage>
        <taxon>Bacteria</taxon>
        <taxon>Pseudomonadati</taxon>
        <taxon>Pseudomonadota</taxon>
        <taxon>Gammaproteobacteria</taxon>
        <taxon>Enterobacterales</taxon>
        <taxon>Enterobacteriaceae</taxon>
        <taxon>Escherichia</taxon>
    </lineage>
</organism>
<proteinExistence type="inferred from homology"/>
<gene>
    <name evidence="1" type="primary">mukB</name>
    <name type="ordered locus">EcHS_A1031</name>
</gene>
<feature type="chain" id="PRO_1000069902" description="Chromosome partition protein MukB">
    <location>
        <begin position="1"/>
        <end position="1486"/>
    </location>
</feature>
<feature type="region of interest" description="Flexible hinge" evidence="1">
    <location>
        <begin position="666"/>
        <end position="783"/>
    </location>
</feature>
<feature type="coiled-coil region" evidence="1">
    <location>
        <begin position="326"/>
        <end position="418"/>
    </location>
</feature>
<feature type="coiled-coil region" evidence="1">
    <location>
        <begin position="444"/>
        <end position="480"/>
    </location>
</feature>
<feature type="coiled-coil region" evidence="1">
    <location>
        <begin position="509"/>
        <end position="603"/>
    </location>
</feature>
<feature type="coiled-coil region" evidence="1">
    <location>
        <begin position="835"/>
        <end position="923"/>
    </location>
</feature>
<feature type="coiled-coil region" evidence="1">
    <location>
        <begin position="977"/>
        <end position="1115"/>
    </location>
</feature>
<feature type="coiled-coil region" evidence="1">
    <location>
        <begin position="1209"/>
        <end position="1266"/>
    </location>
</feature>
<feature type="binding site" evidence="1">
    <location>
        <begin position="34"/>
        <end position="41"/>
    </location>
    <ligand>
        <name>ATP</name>
        <dbReference type="ChEBI" id="CHEBI:30616"/>
    </ligand>
</feature>
<keyword id="KW-0067">ATP-binding</keyword>
<keyword id="KW-0131">Cell cycle</keyword>
<keyword id="KW-0132">Cell division</keyword>
<keyword id="KW-0159">Chromosome partition</keyword>
<keyword id="KW-0175">Coiled coil</keyword>
<keyword id="KW-0963">Cytoplasm</keyword>
<keyword id="KW-0226">DNA condensation</keyword>
<keyword id="KW-0238">DNA-binding</keyword>
<keyword id="KW-0547">Nucleotide-binding</keyword>
<sequence length="1486" mass="170200">MIERGKFRSLTLINWNGFFARTFDLDELVTTLSGGNGAGKSTTMAAFVTALIPDLTLLHFRNTTEAGATSGSRDKGLHGKLKAGVCYSMLDTINSRHQRVVVGVRLQQVAGRDRKVDIKPFAIQGLPMSVQPTQLVTETLNERQARVLPLNELKDKLEAMEGVQFKQFNSITDYHSLMFDLGIIARRLRSASDRSKFYRLIEASLYGGISSAITRSLRDYLLPENSGVRKAFQDMEAALRENRMTLEAIRVTQSDRDLFKHLISEATNYVAADYMRHANERRVHLDKALEFRRELHTSRQQLAAEQYKHVDMARELAEHNGAEGDLEADYQAASDHLNLVQTALRQQEKIERYEADLDELQIRLEEQNEVVAEAIERQEENEARAEAAELEVDELKSQLADYQQALDVQQTRAIQYNQAIAALNRAKELCHLPDLTADSAAEWLETFQAKELEATEKMLSLEQKMSMAQTAHSQFEQAYQLVVAINGPLARNEAWDVARELLREGVDQRHLAEQVQPLRMRLSELEQRLREQQEAERLLADFCKRQGKNFDIDELEALHQELEARIASLSDSVSNAREERMALRQEQEQLQSRIQSLMQRAPVWLAAQNSLNQLSEQCGEEFTSSQDVTEYLQQLLEREREAIVERDEVGARKNAVDEEIERLSQPGGSEDQRLNALAERFGGVLLSEIYDDVSLEDAPYFSALYGPSRHAIVVPDLSQVTEHLEGLTDCPEDLYLIEGDPQSFDDSVFSVDELEKAVVVKIADRQWRYSRFPEVPLFGRAARESRIESLHAEREVLSERFATLSFDVQKTQRLHQAFSRFIGSHLAVAFESDPEAEIRQLNSRRVELERALSNHENDNQQQRIQFEQAKEGVTALNRILPRLNLLADDSLADRVDEIRERLDEAQEAARFVQQFGNQLAKLEPIVSVLQSDPEQFEQLKEDYAYSQQMQRDARQQAFALTEVVQRRAHFSYSDSAEMLSGNSDLNEKLRERLEQAEAERTRAREALRGHAAQLSQYNQVLASLKSSYDTKKELLNDLQRELQDIGVRADSGAEERARIRRDELHAQLSNNRSRRNQLEKALTFCEAEMDNLTRKLRKLERDYFEMREQVVTAKAGWCAVMRMVKDNGVERRLHRRELAYLSADDLRSMSDKALGALRLAVADNEHLRDVLRMSEDPKRPERKIQFFVAVYQHLRERIRQDIIRTDDPVEAIEQMEIELSRLTEELTSREQKLAISSRSVANIIRKTIQREQNRIRMLNQGLQNVSFGQVNSVRLNVNVRETHAMLLDVLSEQHEQHQDLFNSNRLTFSEALAKLYQRLNPQIDMGQRTPQTIGEELLDYRNYLEMEVEVNRGSDGWLRAESGALSTGEAIGTGMSILVMVVQSWEDESRRLRGKDISPCRLLFLDEAARLDARSIATLFELCERLQMQLIIAAPENISPEKGTTYKLVRKVFLNTEHVHVVGLRGFAPQLPETLPGTDEAPSQAS</sequence>
<accession>A7ZYM6</accession>
<name>MUKB_ECOHS</name>